<geneLocation type="chloroplast"/>
<proteinExistence type="inferred from homology"/>
<feature type="chain" id="PRO_0000143484" description="Maturase K">
    <location>
        <begin position="1"/>
        <end position="503"/>
    </location>
</feature>
<feature type="sequence conflict" description="In Ref. 1; AAD10956." evidence="2" ref="1">
    <original>Y</original>
    <variation>D</variation>
    <location>
        <position position="11"/>
    </location>
</feature>
<feature type="sequence conflict" description="In Ref. 1; AAD10956." evidence="2" ref="1">
    <original>I</original>
    <variation>M</variation>
    <location>
        <position position="93"/>
    </location>
</feature>
<feature type="sequence conflict" description="In Ref. 1; AAD10956." evidence="2" ref="1">
    <original>T</original>
    <variation>P</variation>
    <location>
        <position position="271"/>
    </location>
</feature>
<feature type="sequence conflict" description="In Ref. 1; AAD10956." evidence="2" ref="1">
    <original>N</original>
    <variation>H</variation>
    <location>
        <position position="307"/>
    </location>
</feature>
<feature type="sequence conflict" description="In Ref. 1; AAD10956." evidence="2" ref="1">
    <original>I</original>
    <variation>L</variation>
    <location>
        <position position="333"/>
    </location>
</feature>
<feature type="sequence conflict" description="In Ref. 1; AAD10956." evidence="2" ref="1">
    <original>W</original>
    <variation>L</variation>
    <location>
        <position position="489"/>
    </location>
</feature>
<comment type="function">
    <text evidence="1">Usually encoded in the trnK tRNA gene intron. Probably assists in splicing its own and other chloroplast group II introns.</text>
</comment>
<comment type="subcellular location">
    <subcellularLocation>
        <location>Plastid</location>
        <location>Chloroplast</location>
    </subcellularLocation>
</comment>
<comment type="similarity">
    <text evidence="1">Belongs to the intron maturase 2 family. MatK subfamily.</text>
</comment>
<dbReference type="EMBL" id="AF015651">
    <property type="protein sequence ID" value="AAD10956.1"/>
    <property type="molecule type" value="Genomic_DNA"/>
</dbReference>
<dbReference type="EMBL" id="AF304519">
    <property type="protein sequence ID" value="AAL56809.1"/>
    <property type="molecule type" value="Genomic_DNA"/>
</dbReference>
<dbReference type="GO" id="GO:0009507">
    <property type="term" value="C:chloroplast"/>
    <property type="evidence" value="ECO:0007669"/>
    <property type="project" value="UniProtKB-SubCell"/>
</dbReference>
<dbReference type="GO" id="GO:0003723">
    <property type="term" value="F:RNA binding"/>
    <property type="evidence" value="ECO:0007669"/>
    <property type="project" value="UniProtKB-KW"/>
</dbReference>
<dbReference type="GO" id="GO:0006397">
    <property type="term" value="P:mRNA processing"/>
    <property type="evidence" value="ECO:0007669"/>
    <property type="project" value="UniProtKB-KW"/>
</dbReference>
<dbReference type="GO" id="GO:0008380">
    <property type="term" value="P:RNA splicing"/>
    <property type="evidence" value="ECO:0007669"/>
    <property type="project" value="UniProtKB-UniRule"/>
</dbReference>
<dbReference type="GO" id="GO:0008033">
    <property type="term" value="P:tRNA processing"/>
    <property type="evidence" value="ECO:0007669"/>
    <property type="project" value="UniProtKB-KW"/>
</dbReference>
<dbReference type="HAMAP" id="MF_01390">
    <property type="entry name" value="MatK"/>
    <property type="match status" value="1"/>
</dbReference>
<dbReference type="InterPro" id="IPR024937">
    <property type="entry name" value="Domain_X"/>
</dbReference>
<dbReference type="InterPro" id="IPR002866">
    <property type="entry name" value="Maturase_MatK"/>
</dbReference>
<dbReference type="InterPro" id="IPR024942">
    <property type="entry name" value="Maturase_MatK_N"/>
</dbReference>
<dbReference type="PANTHER" id="PTHR34811">
    <property type="entry name" value="MATURASE K"/>
    <property type="match status" value="1"/>
</dbReference>
<dbReference type="PANTHER" id="PTHR34811:SF1">
    <property type="entry name" value="MATURASE K"/>
    <property type="match status" value="1"/>
</dbReference>
<dbReference type="Pfam" id="PF01348">
    <property type="entry name" value="Intron_maturas2"/>
    <property type="match status" value="1"/>
</dbReference>
<dbReference type="Pfam" id="PF01824">
    <property type="entry name" value="MatK_N"/>
    <property type="match status" value="1"/>
</dbReference>
<protein>
    <recommendedName>
        <fullName evidence="1">Maturase K</fullName>
    </recommendedName>
    <alternativeName>
        <fullName evidence="1">Intron maturase</fullName>
    </alternativeName>
</protein>
<accession>Q8WJM5</accession>
<accession>O98371</accession>
<gene>
    <name evidence="1" type="primary">matK</name>
</gene>
<reference key="1">
    <citation type="submission" date="1997-02" db="EMBL/GenBank/DDBJ databases">
        <title>Interspecific relationships and molecular divergence of Hamamelis and Liquidambar (Hamamelidaceae).</title>
        <authorList>
            <person name="Li J.-H."/>
            <person name="Bogle A.L."/>
            <person name="Klein A.S."/>
        </authorList>
    </citation>
    <scope>NUCLEOTIDE SEQUENCE [GENOMIC DNA]</scope>
</reference>
<reference key="2">
    <citation type="submission" date="2000-09" db="EMBL/GenBank/DDBJ databases">
        <title>Phylogeny, evolution and biogeography of Altingioideae (Hamamelidaceae) 1. Phylogenetic analyses of cpDNA matK, IGS, and nrDNA ITS sequences.</title>
        <authorList>
            <person name="Shi S."/>
            <person name="Huang Y."/>
            <person name="Zhang Q."/>
            <person name="Boufford D.E."/>
            <person name="Parks C.R."/>
            <person name="Wen J."/>
        </authorList>
    </citation>
    <scope>NUCLEOTIDE SEQUENCE [GENOMIC DNA]</scope>
</reference>
<sequence length="503" mass="59073">MEESQGYLELYKSGQHDFLYPLIFQEYIYVLAHDHGLNRSILLENLGSDNKFSSLIVKRLITRMYQQNRLIISANDSNQNPFLGHNKDLYSQIISEGFAVIVEIPFPLRLVSSLERKEIVKSHNLRSIHSVFPFLEDKFLHLNYVSDILIPHPIHLEILVQTLRYWVKDASSLHLLRFFLYEYRNWNSLINPKKSIFVFSKRNQRLFLFLYNSHVYEYESVFVFLRNQSSHLRSTSSGALLERIYFYGKIKHLVEVFANDFQAILWLFKDTFVHYVRYQGKSILASKGTPLLMNKWKYYLVNFWQCNFYVWSQPVRIYINQLSNHSLYFLGYISSVGLNPSVVRNQMLENSFIIDNAIKKFDIIVPIIPLIGSLAKAKFCNVLGHPISKPARADSSDSDIIDRFVRICRNLSHYHSGSSKKKSLYRIKYILRLSCARTLARKHKSPVRAFLKRLGSELLEEFLTEEEQVLSLIVPASSTSRRLYRGRIWYLDIICINDLANHE</sequence>
<name>MATK_LIQOR</name>
<evidence type="ECO:0000255" key="1">
    <source>
        <dbReference type="HAMAP-Rule" id="MF_01390"/>
    </source>
</evidence>
<evidence type="ECO:0000305" key="2"/>
<organism>
    <name type="scientific">Liquidambar orientalis</name>
    <name type="common">Oriental sweet gum</name>
    <dbReference type="NCBI Taxonomy" id="63360"/>
    <lineage>
        <taxon>Eukaryota</taxon>
        <taxon>Viridiplantae</taxon>
        <taxon>Streptophyta</taxon>
        <taxon>Embryophyta</taxon>
        <taxon>Tracheophyta</taxon>
        <taxon>Spermatophyta</taxon>
        <taxon>Magnoliopsida</taxon>
        <taxon>eudicotyledons</taxon>
        <taxon>Gunneridae</taxon>
        <taxon>Pentapetalae</taxon>
        <taxon>Saxifragales</taxon>
        <taxon>Altingiaceae</taxon>
        <taxon>Liquidambar</taxon>
    </lineage>
</organism>
<keyword id="KW-0150">Chloroplast</keyword>
<keyword id="KW-0507">mRNA processing</keyword>
<keyword id="KW-0934">Plastid</keyword>
<keyword id="KW-0694">RNA-binding</keyword>
<keyword id="KW-0819">tRNA processing</keyword>